<organism>
    <name type="scientific">Escherichia coli (strain SMS-3-5 / SECEC)</name>
    <dbReference type="NCBI Taxonomy" id="439855"/>
    <lineage>
        <taxon>Bacteria</taxon>
        <taxon>Pseudomonadati</taxon>
        <taxon>Pseudomonadota</taxon>
        <taxon>Gammaproteobacteria</taxon>
        <taxon>Enterobacterales</taxon>
        <taxon>Enterobacteriaceae</taxon>
        <taxon>Escherichia</taxon>
    </lineage>
</organism>
<accession>B1LE43</accession>
<feature type="chain" id="PRO_1000189568" description="3-dehydroquinate dehydratase">
    <location>
        <begin position="1"/>
        <end position="252"/>
    </location>
</feature>
<feature type="active site" description="Proton donor/acceptor" evidence="1">
    <location>
        <position position="143"/>
    </location>
</feature>
<feature type="active site" description="Schiff-base intermediate with substrate" evidence="1">
    <location>
        <position position="170"/>
    </location>
</feature>
<feature type="binding site" evidence="1">
    <location>
        <position position="21"/>
    </location>
    <ligand>
        <name>3-dehydroquinate</name>
        <dbReference type="ChEBI" id="CHEBI:32364"/>
    </ligand>
</feature>
<feature type="binding site" evidence="1">
    <location>
        <begin position="46"/>
        <end position="48"/>
    </location>
    <ligand>
        <name>3-dehydroquinate</name>
        <dbReference type="ChEBI" id="CHEBI:32364"/>
    </ligand>
</feature>
<feature type="binding site" evidence="1">
    <location>
        <position position="82"/>
    </location>
    <ligand>
        <name>3-dehydroquinate</name>
        <dbReference type="ChEBI" id="CHEBI:32364"/>
    </ligand>
</feature>
<feature type="binding site" evidence="1">
    <location>
        <position position="213"/>
    </location>
    <ligand>
        <name>3-dehydroquinate</name>
        <dbReference type="ChEBI" id="CHEBI:32364"/>
    </ligand>
</feature>
<feature type="binding site" evidence="1">
    <location>
        <position position="232"/>
    </location>
    <ligand>
        <name>3-dehydroquinate</name>
        <dbReference type="ChEBI" id="CHEBI:32364"/>
    </ligand>
</feature>
<feature type="binding site" evidence="1">
    <location>
        <position position="236"/>
    </location>
    <ligand>
        <name>3-dehydroquinate</name>
        <dbReference type="ChEBI" id="CHEBI:32364"/>
    </ligand>
</feature>
<protein>
    <recommendedName>
        <fullName evidence="1">3-dehydroquinate dehydratase</fullName>
        <shortName evidence="1">3-dehydroquinase</shortName>
        <ecNumber evidence="1">4.2.1.10</ecNumber>
    </recommendedName>
    <alternativeName>
        <fullName evidence="1">Type I DHQase</fullName>
    </alternativeName>
    <alternativeName>
        <fullName evidence="1">Type I dehydroquinase</fullName>
        <shortName evidence="1">DHQ1</shortName>
    </alternativeName>
</protein>
<reference key="1">
    <citation type="journal article" date="2008" name="J. Bacteriol.">
        <title>Insights into the environmental resistance gene pool from the genome sequence of the multidrug-resistant environmental isolate Escherichia coli SMS-3-5.</title>
        <authorList>
            <person name="Fricke W.F."/>
            <person name="Wright M.S."/>
            <person name="Lindell A.H."/>
            <person name="Harkins D.M."/>
            <person name="Baker-Austin C."/>
            <person name="Ravel J."/>
            <person name="Stepanauskas R."/>
        </authorList>
    </citation>
    <scope>NUCLEOTIDE SEQUENCE [LARGE SCALE GENOMIC DNA]</scope>
    <source>
        <strain>SMS-3-5 / SECEC</strain>
    </source>
</reference>
<comment type="function">
    <text evidence="1">Involved in the third step of the chorismate pathway, which leads to the biosynthesis of aromatic amino acids. Catalyzes the cis-dehydration of 3-dehydroquinate (DHQ) and introduces the first double bond of the aromatic ring to yield 3-dehydroshikimate.</text>
</comment>
<comment type="catalytic activity">
    <reaction evidence="1">
        <text>3-dehydroquinate = 3-dehydroshikimate + H2O</text>
        <dbReference type="Rhea" id="RHEA:21096"/>
        <dbReference type="ChEBI" id="CHEBI:15377"/>
        <dbReference type="ChEBI" id="CHEBI:16630"/>
        <dbReference type="ChEBI" id="CHEBI:32364"/>
        <dbReference type="EC" id="4.2.1.10"/>
    </reaction>
</comment>
<comment type="pathway">
    <text evidence="1">Metabolic intermediate biosynthesis; chorismate biosynthesis; chorismate from D-erythrose 4-phosphate and phosphoenolpyruvate: step 3/7.</text>
</comment>
<comment type="subunit">
    <text evidence="1">Homodimer.</text>
</comment>
<comment type="similarity">
    <text evidence="1">Belongs to the type-I 3-dehydroquinase family.</text>
</comment>
<gene>
    <name evidence="1" type="primary">aroD</name>
    <name type="ordered locus">EcSMS35_1503</name>
</gene>
<proteinExistence type="inferred from homology"/>
<keyword id="KW-0028">Amino-acid biosynthesis</keyword>
<keyword id="KW-0057">Aromatic amino acid biosynthesis</keyword>
<keyword id="KW-0456">Lyase</keyword>
<keyword id="KW-0704">Schiff base</keyword>
<name>AROD_ECOSM</name>
<dbReference type="EC" id="4.2.1.10" evidence="1"/>
<dbReference type="EMBL" id="CP000970">
    <property type="protein sequence ID" value="ACB16389.1"/>
    <property type="molecule type" value="Genomic_DNA"/>
</dbReference>
<dbReference type="RefSeq" id="WP_000860201.1">
    <property type="nucleotide sequence ID" value="NC_010498.1"/>
</dbReference>
<dbReference type="SMR" id="B1LE43"/>
<dbReference type="KEGG" id="ecm:EcSMS35_1503"/>
<dbReference type="HOGENOM" id="CLU_064444_0_0_6"/>
<dbReference type="UniPathway" id="UPA00053">
    <property type="reaction ID" value="UER00086"/>
</dbReference>
<dbReference type="Proteomes" id="UP000007011">
    <property type="component" value="Chromosome"/>
</dbReference>
<dbReference type="GO" id="GO:0003855">
    <property type="term" value="F:3-dehydroquinate dehydratase activity"/>
    <property type="evidence" value="ECO:0007669"/>
    <property type="project" value="UniProtKB-UniRule"/>
</dbReference>
<dbReference type="GO" id="GO:0046279">
    <property type="term" value="P:3,4-dihydroxybenzoate biosynthetic process"/>
    <property type="evidence" value="ECO:0007669"/>
    <property type="project" value="TreeGrafter"/>
</dbReference>
<dbReference type="GO" id="GO:0008652">
    <property type="term" value="P:amino acid biosynthetic process"/>
    <property type="evidence" value="ECO:0007669"/>
    <property type="project" value="UniProtKB-KW"/>
</dbReference>
<dbReference type="GO" id="GO:0009073">
    <property type="term" value="P:aromatic amino acid family biosynthetic process"/>
    <property type="evidence" value="ECO:0007669"/>
    <property type="project" value="UniProtKB-KW"/>
</dbReference>
<dbReference type="GO" id="GO:0009423">
    <property type="term" value="P:chorismate biosynthetic process"/>
    <property type="evidence" value="ECO:0007669"/>
    <property type="project" value="UniProtKB-UniRule"/>
</dbReference>
<dbReference type="CDD" id="cd00502">
    <property type="entry name" value="DHQase_I"/>
    <property type="match status" value="1"/>
</dbReference>
<dbReference type="FunFam" id="3.20.20.70:FF:000047">
    <property type="entry name" value="3-dehydroquinate dehydratase"/>
    <property type="match status" value="1"/>
</dbReference>
<dbReference type="Gene3D" id="3.20.20.70">
    <property type="entry name" value="Aldolase class I"/>
    <property type="match status" value="1"/>
</dbReference>
<dbReference type="HAMAP" id="MF_00214">
    <property type="entry name" value="AroD"/>
    <property type="match status" value="1"/>
</dbReference>
<dbReference type="InterPro" id="IPR018508">
    <property type="entry name" value="3-dehydroquinate_DH_AS"/>
</dbReference>
<dbReference type="InterPro" id="IPR013785">
    <property type="entry name" value="Aldolase_TIM"/>
</dbReference>
<dbReference type="InterPro" id="IPR001381">
    <property type="entry name" value="DHquinase_I"/>
</dbReference>
<dbReference type="InterPro" id="IPR050146">
    <property type="entry name" value="Type-I_3-dehydroquinase"/>
</dbReference>
<dbReference type="NCBIfam" id="TIGR01093">
    <property type="entry name" value="aroD"/>
    <property type="match status" value="1"/>
</dbReference>
<dbReference type="PANTHER" id="PTHR43699">
    <property type="entry name" value="3-DEHYDROQUINATE DEHYDRATASE"/>
    <property type="match status" value="1"/>
</dbReference>
<dbReference type="PANTHER" id="PTHR43699:SF1">
    <property type="entry name" value="3-DEHYDROQUINATE DEHYDRATASE"/>
    <property type="match status" value="1"/>
</dbReference>
<dbReference type="Pfam" id="PF01487">
    <property type="entry name" value="DHquinase_I"/>
    <property type="match status" value="1"/>
</dbReference>
<dbReference type="SUPFAM" id="SSF51569">
    <property type="entry name" value="Aldolase"/>
    <property type="match status" value="1"/>
</dbReference>
<dbReference type="PROSITE" id="PS01028">
    <property type="entry name" value="DEHYDROQUINASE_I"/>
    <property type="match status" value="1"/>
</dbReference>
<evidence type="ECO:0000255" key="1">
    <source>
        <dbReference type="HAMAP-Rule" id="MF_00214"/>
    </source>
</evidence>
<sequence>MKTVTVKDLVIGTGAPKIIVSLMAKDIASVKSEALAYREADFDILEWRVDHYADLSNVESVMAAAKILRETMPEKPLLFTFRSAKEGGEQAISTEAYIALNRAAIDSGLVDMIDLELFTGDDQVKETVAYAHAHDVKVVMSNHDFHKTPEAEEIIARLRKMQSFDADIPKIALMPQSTSDVLTLLAATLEMQEQYADRPIITMSMAKTGVISRLAGEVFGSAATFGAVKKASAPGQISVNDLRTVLTILHQA</sequence>